<gene>
    <name evidence="1" type="primary">hemC</name>
    <name type="ordered locus">MAV_4639</name>
</gene>
<organism>
    <name type="scientific">Mycobacterium avium (strain 104)</name>
    <dbReference type="NCBI Taxonomy" id="243243"/>
    <lineage>
        <taxon>Bacteria</taxon>
        <taxon>Bacillati</taxon>
        <taxon>Actinomycetota</taxon>
        <taxon>Actinomycetes</taxon>
        <taxon>Mycobacteriales</taxon>
        <taxon>Mycobacteriaceae</taxon>
        <taxon>Mycobacterium</taxon>
        <taxon>Mycobacterium avium complex (MAC)</taxon>
    </lineage>
</organism>
<protein>
    <recommendedName>
        <fullName evidence="1">Porphobilinogen deaminase</fullName>
        <shortName evidence="1">PBG</shortName>
        <ecNumber evidence="1">2.5.1.61</ecNumber>
    </recommendedName>
    <alternativeName>
        <fullName evidence="1">Hydroxymethylbilane synthase</fullName>
        <shortName evidence="1">HMBS</shortName>
    </alternativeName>
    <alternativeName>
        <fullName evidence="1">Pre-uroporphyrinogen synthase</fullName>
    </alternativeName>
</protein>
<proteinExistence type="inferred from homology"/>
<keyword id="KW-0627">Porphyrin biosynthesis</keyword>
<keyword id="KW-0808">Transferase</keyword>
<accession>A0QLI0</accession>
<evidence type="ECO:0000255" key="1">
    <source>
        <dbReference type="HAMAP-Rule" id="MF_00260"/>
    </source>
</evidence>
<comment type="function">
    <text evidence="1">Tetrapolymerization of the monopyrrole PBG into the hydroxymethylbilane pre-uroporphyrinogen in several discrete steps.</text>
</comment>
<comment type="catalytic activity">
    <reaction evidence="1">
        <text>4 porphobilinogen + H2O = hydroxymethylbilane + 4 NH4(+)</text>
        <dbReference type="Rhea" id="RHEA:13185"/>
        <dbReference type="ChEBI" id="CHEBI:15377"/>
        <dbReference type="ChEBI" id="CHEBI:28938"/>
        <dbReference type="ChEBI" id="CHEBI:57845"/>
        <dbReference type="ChEBI" id="CHEBI:58126"/>
        <dbReference type="EC" id="2.5.1.61"/>
    </reaction>
</comment>
<comment type="cofactor">
    <cofactor evidence="1">
        <name>dipyrromethane</name>
        <dbReference type="ChEBI" id="CHEBI:60342"/>
    </cofactor>
    <text evidence="1">Binds 1 dipyrromethane group covalently.</text>
</comment>
<comment type="pathway">
    <text evidence="1">Porphyrin-containing compound metabolism; protoporphyrin-IX biosynthesis; coproporphyrinogen-III from 5-aminolevulinate: step 2/4.</text>
</comment>
<comment type="subunit">
    <text evidence="1">Monomer.</text>
</comment>
<comment type="miscellaneous">
    <text evidence="1">The porphobilinogen subunits are added to the dipyrromethane group.</text>
</comment>
<comment type="similarity">
    <text evidence="1">Belongs to the HMBS family.</text>
</comment>
<sequence>MIRIGTRGSLLATTQAGGVRDALIARGHPAELVTITTAGDRSSGPIESLGVGVFTTALREAIEEGRVDAAVHSHKDLPTADDPRFAVAAIPARNDPRDAVVARDGLVLGELPPGSLVGTSSPRRAAQLRALGLGLEIRPLRGNLDTRLNRVSSGDLDAIVVARAGLARLGRLGDVTETLEPVQMLPAPAQGALAVECRAGDSRLAAVLAELDDADTRASVTAERALLAELEAGCSAPVGAIAEVVESIDEDGRIFEELSLRGCVAALDGSDVIRASGIGTPGRARELGLSVAAELFELGARELMSGARHDPARGN</sequence>
<feature type="chain" id="PRO_0000304250" description="Porphobilinogen deaminase">
    <location>
        <begin position="1"/>
        <end position="315"/>
    </location>
</feature>
<feature type="modified residue" description="S-(dipyrrolylmethanemethyl)cysteine" evidence="1">
    <location>
        <position position="234"/>
    </location>
</feature>
<reference key="1">
    <citation type="submission" date="2006-10" db="EMBL/GenBank/DDBJ databases">
        <authorList>
            <person name="Fleischmann R.D."/>
            <person name="Dodson R.J."/>
            <person name="Haft D.H."/>
            <person name="Merkel J.S."/>
            <person name="Nelson W.C."/>
            <person name="Fraser C.M."/>
        </authorList>
    </citation>
    <scope>NUCLEOTIDE SEQUENCE [LARGE SCALE GENOMIC DNA]</scope>
    <source>
        <strain>104</strain>
    </source>
</reference>
<dbReference type="EC" id="2.5.1.61" evidence="1"/>
<dbReference type="EMBL" id="CP000479">
    <property type="protein sequence ID" value="ABK69214.1"/>
    <property type="molecule type" value="Genomic_DNA"/>
</dbReference>
<dbReference type="RefSeq" id="WP_011726169.1">
    <property type="nucleotide sequence ID" value="NC_008595.1"/>
</dbReference>
<dbReference type="SMR" id="A0QLI0"/>
<dbReference type="KEGG" id="mav:MAV_4639"/>
<dbReference type="HOGENOM" id="CLU_019704_1_0_11"/>
<dbReference type="UniPathway" id="UPA00251">
    <property type="reaction ID" value="UER00319"/>
</dbReference>
<dbReference type="Proteomes" id="UP000001574">
    <property type="component" value="Chromosome"/>
</dbReference>
<dbReference type="GO" id="GO:0005737">
    <property type="term" value="C:cytoplasm"/>
    <property type="evidence" value="ECO:0007669"/>
    <property type="project" value="TreeGrafter"/>
</dbReference>
<dbReference type="GO" id="GO:0004418">
    <property type="term" value="F:hydroxymethylbilane synthase activity"/>
    <property type="evidence" value="ECO:0007669"/>
    <property type="project" value="UniProtKB-UniRule"/>
</dbReference>
<dbReference type="GO" id="GO:0006782">
    <property type="term" value="P:protoporphyrinogen IX biosynthetic process"/>
    <property type="evidence" value="ECO:0007669"/>
    <property type="project" value="UniProtKB-UniRule"/>
</dbReference>
<dbReference type="FunFam" id="3.30.160.40:FF:000001">
    <property type="entry name" value="Porphobilinogen deaminase"/>
    <property type="match status" value="1"/>
</dbReference>
<dbReference type="FunFam" id="3.40.190.10:FF:000005">
    <property type="entry name" value="Porphobilinogen deaminase"/>
    <property type="match status" value="1"/>
</dbReference>
<dbReference type="Gene3D" id="3.40.190.10">
    <property type="entry name" value="Periplasmic binding protein-like II"/>
    <property type="match status" value="2"/>
</dbReference>
<dbReference type="Gene3D" id="3.30.160.40">
    <property type="entry name" value="Porphobilinogen deaminase, C-terminal domain"/>
    <property type="match status" value="1"/>
</dbReference>
<dbReference type="HAMAP" id="MF_00260">
    <property type="entry name" value="Porphobil_deam"/>
    <property type="match status" value="1"/>
</dbReference>
<dbReference type="InterPro" id="IPR000860">
    <property type="entry name" value="HemC"/>
</dbReference>
<dbReference type="InterPro" id="IPR022419">
    <property type="entry name" value="Porphobilin_deaminase_cofac_BS"/>
</dbReference>
<dbReference type="InterPro" id="IPR022417">
    <property type="entry name" value="Porphobilin_deaminase_N"/>
</dbReference>
<dbReference type="InterPro" id="IPR022418">
    <property type="entry name" value="Porphobilinogen_deaminase_C"/>
</dbReference>
<dbReference type="InterPro" id="IPR036803">
    <property type="entry name" value="Porphobilinogen_deaminase_C_sf"/>
</dbReference>
<dbReference type="NCBIfam" id="TIGR00212">
    <property type="entry name" value="hemC"/>
    <property type="match status" value="1"/>
</dbReference>
<dbReference type="PANTHER" id="PTHR11557">
    <property type="entry name" value="PORPHOBILINOGEN DEAMINASE"/>
    <property type="match status" value="1"/>
</dbReference>
<dbReference type="PANTHER" id="PTHR11557:SF0">
    <property type="entry name" value="PORPHOBILINOGEN DEAMINASE"/>
    <property type="match status" value="1"/>
</dbReference>
<dbReference type="Pfam" id="PF01379">
    <property type="entry name" value="Porphobil_deam"/>
    <property type="match status" value="1"/>
</dbReference>
<dbReference type="Pfam" id="PF03900">
    <property type="entry name" value="Porphobil_deamC"/>
    <property type="match status" value="1"/>
</dbReference>
<dbReference type="PIRSF" id="PIRSF001438">
    <property type="entry name" value="4pyrrol_synth_OHMeBilane_synth"/>
    <property type="match status" value="1"/>
</dbReference>
<dbReference type="PRINTS" id="PR00151">
    <property type="entry name" value="PORPHBDMNASE"/>
</dbReference>
<dbReference type="SUPFAM" id="SSF53850">
    <property type="entry name" value="Periplasmic binding protein-like II"/>
    <property type="match status" value="1"/>
</dbReference>
<dbReference type="SUPFAM" id="SSF54782">
    <property type="entry name" value="Porphobilinogen deaminase (hydroxymethylbilane synthase), C-terminal domain"/>
    <property type="match status" value="1"/>
</dbReference>
<dbReference type="PROSITE" id="PS00533">
    <property type="entry name" value="PORPHOBILINOGEN_DEAM"/>
    <property type="match status" value="1"/>
</dbReference>
<name>HEM3_MYCA1</name>